<reference key="1">
    <citation type="journal article" date="2005" name="J. Gen. Virol.">
        <title>A novel class of herpesvirus with bivalve hosts.</title>
        <authorList>
            <person name="Davison A.J."/>
            <person name="Trus B.L."/>
            <person name="Cheng N."/>
            <person name="Steven A.C."/>
            <person name="Watson M.S."/>
            <person name="Cunningham C."/>
            <person name="Le Deuff R.M."/>
            <person name="Renault T."/>
        </authorList>
    </citation>
    <scope>NUCLEOTIDE SEQUENCE [LARGE SCALE GENOMIC DNA]</scope>
</reference>
<evidence type="ECO:0000255" key="1"/>
<protein>
    <recommendedName>
        <fullName>Uncharacterized protein ORF83</fullName>
    </recommendedName>
</protein>
<proteinExistence type="inferred from homology"/>
<name>Y083_OSHVF</name>
<gene>
    <name type="ORF">ORF83</name>
</gene>
<organism>
    <name type="scientific">Ostreid herpesvirus 1 (isolate France)</name>
    <name type="common">OsHV-1</name>
    <name type="synonym">Pacific oyster herpesvirus</name>
    <dbReference type="NCBI Taxonomy" id="654903"/>
    <lineage>
        <taxon>Viruses</taxon>
        <taxon>Duplodnaviria</taxon>
        <taxon>Heunggongvirae</taxon>
        <taxon>Peploviricota</taxon>
        <taxon>Herviviricetes</taxon>
        <taxon>Herpesvirales</taxon>
        <taxon>Malacoherpesviridae</taxon>
        <taxon>Ostreavirus</taxon>
        <taxon>Ostreavirus ostreidmalaco1</taxon>
        <taxon>Ostreid herpesvirus 1</taxon>
    </lineage>
</organism>
<feature type="signal peptide" evidence="1">
    <location>
        <begin position="1"/>
        <end position="19"/>
    </location>
</feature>
<feature type="chain" id="PRO_0000385104" description="Uncharacterized protein ORF83">
    <location>
        <begin position="20"/>
        <end position="368"/>
    </location>
</feature>
<feature type="glycosylation site" description="N-linked (GlcNAc...) asparagine; by host" evidence="1">
    <location>
        <position position="99"/>
    </location>
</feature>
<feature type="glycosylation site" description="N-linked (GlcNAc...) asparagine; by host" evidence="1">
    <location>
        <position position="170"/>
    </location>
</feature>
<feature type="glycosylation site" description="N-linked (GlcNAc...) asparagine; by host" evidence="1">
    <location>
        <position position="266"/>
    </location>
</feature>
<feature type="glycosylation site" description="N-linked (GlcNAc...) asparagine; by host" evidence="1">
    <location>
        <position position="295"/>
    </location>
</feature>
<accession>Q6R7E6</accession>
<sequence length="368" mass="43078">MHVSMIIFVSIFSIKYIMATKYTMRVLIPKYGKGMKTEYFYNMIKESRPNASPLKITESYGRDAHLNLYALSTSQSLMLTYGKDEFWKIIENKLGNEVNETIDLDDLYPSRYRMRFVFKDLISSDNDLYMDTKFSDKITSTKQQKKWVKESVKKTKNKLEEISHSAKLWNATIYMDILKDDNMELYDDKTVTKIKKQGKVKQLPVYCHMDKSVNQYTNEIVAKRKNPIEIVDKKDVSVAPLRFNAFMATIQQKFVTGNKKDPFWANITEEYLTSVIGESELIFPAKFKVIMELENLTDPDEDKKIESTISNTVYNREEMVNMLDILIQMLIVRLNEESHPGKIWNVKATIVGIREMYDDVKTIKHFLV</sequence>
<keyword id="KW-0325">Glycoprotein</keyword>
<keyword id="KW-1185">Reference proteome</keyword>
<keyword id="KW-0732">Signal</keyword>
<organismHost>
    <name type="scientific">Magallana gigas</name>
    <name type="common">Pacific oyster</name>
    <name type="synonym">Crassostrea gigas</name>
    <dbReference type="NCBI Taxonomy" id="29159"/>
</organismHost>
<organismHost>
    <name type="scientific">Pecten maximus</name>
    <name type="common">King scallop</name>
    <name type="synonym">Pilgrim's clam</name>
    <dbReference type="NCBI Taxonomy" id="6579"/>
</organismHost>
<dbReference type="EMBL" id="AY509253">
    <property type="protein sequence ID" value="AAS00969.1"/>
    <property type="molecule type" value="Genomic_DNA"/>
</dbReference>
<dbReference type="RefSeq" id="YP_024622.1">
    <property type="nucleotide sequence ID" value="NC_005881.2"/>
</dbReference>
<dbReference type="KEGG" id="vg:2948181"/>
<dbReference type="Proteomes" id="UP000007021">
    <property type="component" value="Segment"/>
</dbReference>